<gene>
    <name type="ordered locus">NGR_c27950</name>
</gene>
<accession>C3MIH9</accession>
<sequence>MAGHSQFKNIMHRKGRQDAVRSKMFSKLAREITVAAKSGMPDPAMNPRLRLAIQNAKAQSMPKDNIERAVKKAAGGDAENYEEVRYEGYGPGGVAVIVEALTDNRNRTASNVRSMFTKAGGALGETGSVSFSFDRVGEITYTLSAGDADKVMEAAIESGADDVTTDEDGHTILCGFEEIGDVSKALEGVLGEAETVKAIWKPQNTVPVDEEKAQSLMKLIDNLEDDDDVQNVYSNFEVSEEVLAKLSA</sequence>
<feature type="chain" id="PRO_1000200106" description="Probable transcriptional regulatory protein NGR_c27950">
    <location>
        <begin position="1"/>
        <end position="248"/>
    </location>
</feature>
<dbReference type="EMBL" id="CP001389">
    <property type="protein sequence ID" value="ACP26542.1"/>
    <property type="molecule type" value="Genomic_DNA"/>
</dbReference>
<dbReference type="RefSeq" id="WP_012709298.1">
    <property type="nucleotide sequence ID" value="NC_012587.1"/>
</dbReference>
<dbReference type="RefSeq" id="YP_002827295.1">
    <property type="nucleotide sequence ID" value="NC_012587.1"/>
</dbReference>
<dbReference type="SMR" id="C3MIH9"/>
<dbReference type="STRING" id="394.NGR_c27950"/>
<dbReference type="KEGG" id="rhi:NGR_c27950"/>
<dbReference type="PATRIC" id="fig|394.7.peg.5630"/>
<dbReference type="eggNOG" id="COG0217">
    <property type="taxonomic scope" value="Bacteria"/>
</dbReference>
<dbReference type="HOGENOM" id="CLU_062974_2_2_5"/>
<dbReference type="OrthoDB" id="9781053at2"/>
<dbReference type="Proteomes" id="UP000001054">
    <property type="component" value="Chromosome"/>
</dbReference>
<dbReference type="GO" id="GO:0005829">
    <property type="term" value="C:cytosol"/>
    <property type="evidence" value="ECO:0007669"/>
    <property type="project" value="TreeGrafter"/>
</dbReference>
<dbReference type="GO" id="GO:0003677">
    <property type="term" value="F:DNA binding"/>
    <property type="evidence" value="ECO:0007669"/>
    <property type="project" value="UniProtKB-UniRule"/>
</dbReference>
<dbReference type="GO" id="GO:0006355">
    <property type="term" value="P:regulation of DNA-templated transcription"/>
    <property type="evidence" value="ECO:0007669"/>
    <property type="project" value="UniProtKB-UniRule"/>
</dbReference>
<dbReference type="FunFam" id="1.10.10.200:FF:000002">
    <property type="entry name" value="Probable transcriptional regulatory protein CLM62_37755"/>
    <property type="match status" value="1"/>
</dbReference>
<dbReference type="Gene3D" id="1.10.10.200">
    <property type="match status" value="1"/>
</dbReference>
<dbReference type="Gene3D" id="3.30.70.980">
    <property type="match status" value="2"/>
</dbReference>
<dbReference type="HAMAP" id="MF_00693">
    <property type="entry name" value="Transcrip_reg_TACO1"/>
    <property type="match status" value="1"/>
</dbReference>
<dbReference type="InterPro" id="IPR017856">
    <property type="entry name" value="Integrase-like_N"/>
</dbReference>
<dbReference type="InterPro" id="IPR048300">
    <property type="entry name" value="TACO1_YebC-like_2nd/3rd_dom"/>
</dbReference>
<dbReference type="InterPro" id="IPR049083">
    <property type="entry name" value="TACO1_YebC_N"/>
</dbReference>
<dbReference type="InterPro" id="IPR002876">
    <property type="entry name" value="Transcrip_reg_TACO1-like"/>
</dbReference>
<dbReference type="InterPro" id="IPR026564">
    <property type="entry name" value="Transcrip_reg_TACO1-like_dom3"/>
</dbReference>
<dbReference type="InterPro" id="IPR029072">
    <property type="entry name" value="YebC-like"/>
</dbReference>
<dbReference type="NCBIfam" id="NF001030">
    <property type="entry name" value="PRK00110.1"/>
    <property type="match status" value="1"/>
</dbReference>
<dbReference type="NCBIfam" id="NF009044">
    <property type="entry name" value="PRK12378.1"/>
    <property type="match status" value="1"/>
</dbReference>
<dbReference type="NCBIfam" id="TIGR01033">
    <property type="entry name" value="YebC/PmpR family DNA-binding transcriptional regulator"/>
    <property type="match status" value="1"/>
</dbReference>
<dbReference type="PANTHER" id="PTHR12532:SF6">
    <property type="entry name" value="TRANSCRIPTIONAL REGULATORY PROTEIN YEBC-RELATED"/>
    <property type="match status" value="1"/>
</dbReference>
<dbReference type="PANTHER" id="PTHR12532">
    <property type="entry name" value="TRANSLATIONAL ACTIVATOR OF CYTOCHROME C OXIDASE 1"/>
    <property type="match status" value="1"/>
</dbReference>
<dbReference type="Pfam" id="PF20772">
    <property type="entry name" value="TACO1_YebC_N"/>
    <property type="match status" value="1"/>
</dbReference>
<dbReference type="Pfam" id="PF01709">
    <property type="entry name" value="Transcrip_reg"/>
    <property type="match status" value="1"/>
</dbReference>
<dbReference type="SUPFAM" id="SSF75625">
    <property type="entry name" value="YebC-like"/>
    <property type="match status" value="1"/>
</dbReference>
<evidence type="ECO:0000255" key="1">
    <source>
        <dbReference type="HAMAP-Rule" id="MF_00693"/>
    </source>
</evidence>
<reference key="1">
    <citation type="journal article" date="2009" name="Appl. Environ. Microbiol.">
        <title>Rhizobium sp. strain NGR234 possesses a remarkable number of secretion systems.</title>
        <authorList>
            <person name="Schmeisser C."/>
            <person name="Liesegang H."/>
            <person name="Krysciak D."/>
            <person name="Bakkou N."/>
            <person name="Le Quere A."/>
            <person name="Wollherr A."/>
            <person name="Heinemeyer I."/>
            <person name="Morgenstern B."/>
            <person name="Pommerening-Roeser A."/>
            <person name="Flores M."/>
            <person name="Palacios R."/>
            <person name="Brenner S."/>
            <person name="Gottschalk G."/>
            <person name="Schmitz R.A."/>
            <person name="Broughton W.J."/>
            <person name="Perret X."/>
            <person name="Strittmatter A.W."/>
            <person name="Streit W.R."/>
        </authorList>
    </citation>
    <scope>NUCLEOTIDE SEQUENCE [LARGE SCALE GENOMIC DNA]</scope>
    <source>
        <strain>NBRC 101917 / NGR234</strain>
    </source>
</reference>
<proteinExistence type="inferred from homology"/>
<keyword id="KW-0963">Cytoplasm</keyword>
<keyword id="KW-0238">DNA-binding</keyword>
<keyword id="KW-1185">Reference proteome</keyword>
<keyword id="KW-0804">Transcription</keyword>
<keyword id="KW-0805">Transcription regulation</keyword>
<organism>
    <name type="scientific">Sinorhizobium fredii (strain NBRC 101917 / NGR234)</name>
    <dbReference type="NCBI Taxonomy" id="394"/>
    <lineage>
        <taxon>Bacteria</taxon>
        <taxon>Pseudomonadati</taxon>
        <taxon>Pseudomonadota</taxon>
        <taxon>Alphaproteobacteria</taxon>
        <taxon>Hyphomicrobiales</taxon>
        <taxon>Rhizobiaceae</taxon>
        <taxon>Sinorhizobium/Ensifer group</taxon>
        <taxon>Sinorhizobium</taxon>
    </lineage>
</organism>
<comment type="subcellular location">
    <subcellularLocation>
        <location evidence="1">Cytoplasm</location>
    </subcellularLocation>
</comment>
<comment type="similarity">
    <text evidence="1">Belongs to the TACO1 family.</text>
</comment>
<protein>
    <recommendedName>
        <fullName evidence="1">Probable transcriptional regulatory protein NGR_c27950</fullName>
    </recommendedName>
</protein>
<name>Y2795_SINFN</name>